<proteinExistence type="inferred from homology"/>
<reference key="1">
    <citation type="journal article" date="2005" name="Nat. Biotechnol.">
        <title>Complete genome sequence of the plant commensal Pseudomonas fluorescens Pf-5.</title>
        <authorList>
            <person name="Paulsen I.T."/>
            <person name="Press C.M."/>
            <person name="Ravel J."/>
            <person name="Kobayashi D.Y."/>
            <person name="Myers G.S.A."/>
            <person name="Mavrodi D.V."/>
            <person name="DeBoy R.T."/>
            <person name="Seshadri R."/>
            <person name="Ren Q."/>
            <person name="Madupu R."/>
            <person name="Dodson R.J."/>
            <person name="Durkin A.S."/>
            <person name="Brinkac L.M."/>
            <person name="Daugherty S.C."/>
            <person name="Sullivan S.A."/>
            <person name="Rosovitz M.J."/>
            <person name="Gwinn M.L."/>
            <person name="Zhou L."/>
            <person name="Schneider D.J."/>
            <person name="Cartinhour S.W."/>
            <person name="Nelson W.C."/>
            <person name="Weidman J."/>
            <person name="Watkins K."/>
            <person name="Tran K."/>
            <person name="Khouri H."/>
            <person name="Pierson E.A."/>
            <person name="Pierson L.S. III"/>
            <person name="Thomashow L.S."/>
            <person name="Loper J.E."/>
        </authorList>
    </citation>
    <scope>NUCLEOTIDE SEQUENCE [LARGE SCALE GENOMIC DNA]</scope>
    <source>
        <strain>ATCC BAA-477 / NRRL B-23932 / Pf-5</strain>
    </source>
</reference>
<gene>
    <name evidence="1" type="primary">rnc</name>
    <name type="ordered locus">PFL_1071</name>
</gene>
<protein>
    <recommendedName>
        <fullName evidence="1">Ribonuclease 3</fullName>
        <ecNumber evidence="1">3.1.26.3</ecNumber>
    </recommendedName>
    <alternativeName>
        <fullName evidence="1">Ribonuclease III</fullName>
        <shortName evidence="1">RNase III</shortName>
    </alternativeName>
</protein>
<keyword id="KW-0963">Cytoplasm</keyword>
<keyword id="KW-0255">Endonuclease</keyword>
<keyword id="KW-0378">Hydrolase</keyword>
<keyword id="KW-0460">Magnesium</keyword>
<keyword id="KW-0479">Metal-binding</keyword>
<keyword id="KW-0507">mRNA processing</keyword>
<keyword id="KW-0540">Nuclease</keyword>
<keyword id="KW-0694">RNA-binding</keyword>
<keyword id="KW-0698">rRNA processing</keyword>
<keyword id="KW-0699">rRNA-binding</keyword>
<keyword id="KW-0819">tRNA processing</keyword>
<evidence type="ECO:0000255" key="1">
    <source>
        <dbReference type="HAMAP-Rule" id="MF_00104"/>
    </source>
</evidence>
<feature type="chain" id="PRO_0000228566" description="Ribonuclease 3">
    <location>
        <begin position="1"/>
        <end position="229"/>
    </location>
</feature>
<feature type="domain" description="RNase III" evidence="1">
    <location>
        <begin position="5"/>
        <end position="127"/>
    </location>
</feature>
<feature type="domain" description="DRBM" evidence="1">
    <location>
        <begin position="154"/>
        <end position="224"/>
    </location>
</feature>
<feature type="active site" evidence="1">
    <location>
        <position position="44"/>
    </location>
</feature>
<feature type="active site" evidence="1">
    <location>
        <position position="116"/>
    </location>
</feature>
<feature type="binding site" evidence="1">
    <location>
        <position position="40"/>
    </location>
    <ligand>
        <name>Mg(2+)</name>
        <dbReference type="ChEBI" id="CHEBI:18420"/>
    </ligand>
</feature>
<feature type="binding site" evidence="1">
    <location>
        <position position="113"/>
    </location>
    <ligand>
        <name>Mg(2+)</name>
        <dbReference type="ChEBI" id="CHEBI:18420"/>
    </ligand>
</feature>
<feature type="binding site" evidence="1">
    <location>
        <position position="116"/>
    </location>
    <ligand>
        <name>Mg(2+)</name>
        <dbReference type="ChEBI" id="CHEBI:18420"/>
    </ligand>
</feature>
<organism>
    <name type="scientific">Pseudomonas fluorescens (strain ATCC BAA-477 / NRRL B-23932 / Pf-5)</name>
    <dbReference type="NCBI Taxonomy" id="220664"/>
    <lineage>
        <taxon>Bacteria</taxon>
        <taxon>Pseudomonadati</taxon>
        <taxon>Pseudomonadota</taxon>
        <taxon>Gammaproteobacteria</taxon>
        <taxon>Pseudomonadales</taxon>
        <taxon>Pseudomonadaceae</taxon>
        <taxon>Pseudomonas</taxon>
    </lineage>
</organism>
<sequence length="229" mass="25521">MSVSLSRLERQLGYSFKDQELMLLALTHRSFAGRNNERLEFLGDAILNFVAGEALFERFPQAREGQLSRLRARLVKGETLAVLARGFDLGEYLRLGSGELKSGGFRRESILADALEALIGAIYLDAGMETARDRVLSWLASEFESLTLVDTNKDPKTRLQEFLQSRACELPRYEVVDIQGEPHCRTFFVECEVTLLNEKSRGQGVSRRIAEQVAAAAALIALGVENGHD</sequence>
<dbReference type="EC" id="3.1.26.3" evidence="1"/>
<dbReference type="EMBL" id="CP000076">
    <property type="protein sequence ID" value="AAY90358.2"/>
    <property type="molecule type" value="Genomic_DNA"/>
</dbReference>
<dbReference type="RefSeq" id="WP_011059421.1">
    <property type="nucleotide sequence ID" value="NC_004129.6"/>
</dbReference>
<dbReference type="SMR" id="Q4KHT1"/>
<dbReference type="STRING" id="220664.PFL_1071"/>
<dbReference type="GeneID" id="57474075"/>
<dbReference type="KEGG" id="pfl:PFL_1071"/>
<dbReference type="eggNOG" id="COG0571">
    <property type="taxonomic scope" value="Bacteria"/>
</dbReference>
<dbReference type="HOGENOM" id="CLU_000907_1_1_6"/>
<dbReference type="Proteomes" id="UP000008540">
    <property type="component" value="Chromosome"/>
</dbReference>
<dbReference type="GO" id="GO:0005737">
    <property type="term" value="C:cytoplasm"/>
    <property type="evidence" value="ECO:0007669"/>
    <property type="project" value="UniProtKB-SubCell"/>
</dbReference>
<dbReference type="GO" id="GO:0003725">
    <property type="term" value="F:double-stranded RNA binding"/>
    <property type="evidence" value="ECO:0007669"/>
    <property type="project" value="TreeGrafter"/>
</dbReference>
<dbReference type="GO" id="GO:0046872">
    <property type="term" value="F:metal ion binding"/>
    <property type="evidence" value="ECO:0007669"/>
    <property type="project" value="UniProtKB-KW"/>
</dbReference>
<dbReference type="GO" id="GO:0004525">
    <property type="term" value="F:ribonuclease III activity"/>
    <property type="evidence" value="ECO:0007669"/>
    <property type="project" value="UniProtKB-UniRule"/>
</dbReference>
<dbReference type="GO" id="GO:0019843">
    <property type="term" value="F:rRNA binding"/>
    <property type="evidence" value="ECO:0007669"/>
    <property type="project" value="UniProtKB-KW"/>
</dbReference>
<dbReference type="GO" id="GO:0006397">
    <property type="term" value="P:mRNA processing"/>
    <property type="evidence" value="ECO:0007669"/>
    <property type="project" value="UniProtKB-UniRule"/>
</dbReference>
<dbReference type="GO" id="GO:0010468">
    <property type="term" value="P:regulation of gene expression"/>
    <property type="evidence" value="ECO:0007669"/>
    <property type="project" value="TreeGrafter"/>
</dbReference>
<dbReference type="GO" id="GO:0006364">
    <property type="term" value="P:rRNA processing"/>
    <property type="evidence" value="ECO:0007669"/>
    <property type="project" value="UniProtKB-UniRule"/>
</dbReference>
<dbReference type="GO" id="GO:0008033">
    <property type="term" value="P:tRNA processing"/>
    <property type="evidence" value="ECO:0007669"/>
    <property type="project" value="UniProtKB-KW"/>
</dbReference>
<dbReference type="CDD" id="cd10845">
    <property type="entry name" value="DSRM_RNAse_III_family"/>
    <property type="match status" value="1"/>
</dbReference>
<dbReference type="CDD" id="cd00593">
    <property type="entry name" value="RIBOc"/>
    <property type="match status" value="1"/>
</dbReference>
<dbReference type="FunFam" id="1.10.1520.10:FF:000001">
    <property type="entry name" value="Ribonuclease 3"/>
    <property type="match status" value="1"/>
</dbReference>
<dbReference type="FunFam" id="3.30.160.20:FF:000003">
    <property type="entry name" value="Ribonuclease 3"/>
    <property type="match status" value="1"/>
</dbReference>
<dbReference type="Gene3D" id="3.30.160.20">
    <property type="match status" value="1"/>
</dbReference>
<dbReference type="Gene3D" id="1.10.1520.10">
    <property type="entry name" value="Ribonuclease III domain"/>
    <property type="match status" value="1"/>
</dbReference>
<dbReference type="HAMAP" id="MF_00104">
    <property type="entry name" value="RNase_III"/>
    <property type="match status" value="1"/>
</dbReference>
<dbReference type="InterPro" id="IPR014720">
    <property type="entry name" value="dsRBD_dom"/>
</dbReference>
<dbReference type="InterPro" id="IPR011907">
    <property type="entry name" value="RNase_III"/>
</dbReference>
<dbReference type="InterPro" id="IPR000999">
    <property type="entry name" value="RNase_III_dom"/>
</dbReference>
<dbReference type="InterPro" id="IPR036389">
    <property type="entry name" value="RNase_III_sf"/>
</dbReference>
<dbReference type="NCBIfam" id="TIGR02191">
    <property type="entry name" value="RNaseIII"/>
    <property type="match status" value="1"/>
</dbReference>
<dbReference type="PANTHER" id="PTHR11207:SF0">
    <property type="entry name" value="RIBONUCLEASE 3"/>
    <property type="match status" value="1"/>
</dbReference>
<dbReference type="PANTHER" id="PTHR11207">
    <property type="entry name" value="RIBONUCLEASE III"/>
    <property type="match status" value="1"/>
</dbReference>
<dbReference type="Pfam" id="PF00035">
    <property type="entry name" value="dsrm"/>
    <property type="match status" value="1"/>
</dbReference>
<dbReference type="Pfam" id="PF14622">
    <property type="entry name" value="Ribonucleas_3_3"/>
    <property type="match status" value="1"/>
</dbReference>
<dbReference type="SMART" id="SM00358">
    <property type="entry name" value="DSRM"/>
    <property type="match status" value="1"/>
</dbReference>
<dbReference type="SMART" id="SM00535">
    <property type="entry name" value="RIBOc"/>
    <property type="match status" value="1"/>
</dbReference>
<dbReference type="SUPFAM" id="SSF54768">
    <property type="entry name" value="dsRNA-binding domain-like"/>
    <property type="match status" value="1"/>
</dbReference>
<dbReference type="SUPFAM" id="SSF69065">
    <property type="entry name" value="RNase III domain-like"/>
    <property type="match status" value="1"/>
</dbReference>
<dbReference type="PROSITE" id="PS50137">
    <property type="entry name" value="DS_RBD"/>
    <property type="match status" value="1"/>
</dbReference>
<dbReference type="PROSITE" id="PS00517">
    <property type="entry name" value="RNASE_3_1"/>
    <property type="match status" value="1"/>
</dbReference>
<dbReference type="PROSITE" id="PS50142">
    <property type="entry name" value="RNASE_3_2"/>
    <property type="match status" value="1"/>
</dbReference>
<name>RNC_PSEF5</name>
<accession>Q4KHT1</accession>
<comment type="function">
    <text evidence="1">Digests double-stranded RNA. Involved in the processing of primary rRNA transcript to yield the immediate precursors to the large and small rRNAs (23S and 16S). Processes some mRNAs, and tRNAs when they are encoded in the rRNA operon. Processes pre-crRNA and tracrRNA of type II CRISPR loci if present in the organism.</text>
</comment>
<comment type="catalytic activity">
    <reaction evidence="1">
        <text>Endonucleolytic cleavage to 5'-phosphomonoester.</text>
        <dbReference type="EC" id="3.1.26.3"/>
    </reaction>
</comment>
<comment type="cofactor">
    <cofactor evidence="1">
        <name>Mg(2+)</name>
        <dbReference type="ChEBI" id="CHEBI:18420"/>
    </cofactor>
</comment>
<comment type="subunit">
    <text evidence="1">Homodimer.</text>
</comment>
<comment type="subcellular location">
    <subcellularLocation>
        <location evidence="1">Cytoplasm</location>
    </subcellularLocation>
</comment>
<comment type="similarity">
    <text evidence="1">Belongs to the ribonuclease III family.</text>
</comment>